<keyword id="KW-0010">Activator</keyword>
<keyword id="KW-0175">Coiled coil</keyword>
<keyword id="KW-0238">DNA-binding</keyword>
<keyword id="KW-0539">Nucleus</keyword>
<keyword id="KW-1185">Reference proteome</keyword>
<keyword id="KW-0804">Transcription</keyword>
<keyword id="KW-0805">Transcription regulation</keyword>
<reference evidence="8" key="1">
    <citation type="journal article" date="1998" name="Science">
        <title>Genome sequence of the nematode C. elegans: a platform for investigating biology.</title>
        <authorList>
            <consortium name="The C. elegans sequencing consortium"/>
        </authorList>
    </citation>
    <scope>NUCLEOTIDE SEQUENCE [LARGE SCALE GENOMIC DNA]</scope>
    <source>
        <strain evidence="8">Bristol N2</strain>
    </source>
</reference>
<reference evidence="5" key="2">
    <citation type="journal article" date="2016" name="Aging (Albany NY)">
        <title>An intestinal microRNA modulates the homeostatic adaptation to chronic oxidative stress in C. elegans.</title>
        <authorList>
            <person name="Kato M."/>
            <person name="Kashem M.A."/>
            <person name="Cheng C."/>
        </authorList>
    </citation>
    <scope>INDUCTION</scope>
    <scope>DISRUPTION PHENOTYPE</scope>
</reference>
<reference evidence="5" key="3">
    <citation type="journal article" date="2018" name="Elife">
        <title>A genetic program mediates cold-warming response and promotes stress-induced phenoptosis in C. elegans.</title>
        <authorList>
            <person name="Jiang W."/>
            <person name="Wei Y."/>
            <person name="Long Y."/>
            <person name="Owen A."/>
            <person name="Wang B."/>
            <person name="Wu X."/>
            <person name="Luo S."/>
            <person name="Dang Y."/>
            <person name="Ma D.K."/>
        </authorList>
    </citation>
    <scope>FUNCTION</scope>
    <scope>SUBCELLULAR LOCATION</scope>
    <scope>INDUCTION</scope>
    <scope>MUTAGENESIS OF 161-GLN--ASN-163</scope>
</reference>
<gene>
    <name evidence="9" type="primary">zip-10</name>
    <name evidence="9" type="ORF">T27F2.4</name>
</gene>
<feature type="chain" id="PRO_0000444633" description="Transcription factor zip-10">
    <location>
        <begin position="1"/>
        <end position="165"/>
    </location>
</feature>
<feature type="region of interest" description="Disordered" evidence="2">
    <location>
        <begin position="53"/>
        <end position="99"/>
    </location>
</feature>
<feature type="coiled-coil region" evidence="1">
    <location>
        <begin position="104"/>
        <end position="150"/>
    </location>
</feature>
<feature type="compositionally biased region" description="Low complexity" evidence="2">
    <location>
        <begin position="53"/>
        <end position="71"/>
    </location>
</feature>
<feature type="mutagenesis site" description="Abolishes death promoting effect." evidence="4">
    <original>QIN</original>
    <variation>VIA</variation>
    <location>
        <begin position="161"/>
        <end position="163"/>
    </location>
</feature>
<evidence type="ECO:0000255" key="1"/>
<evidence type="ECO:0000256" key="2">
    <source>
        <dbReference type="SAM" id="MobiDB-lite"/>
    </source>
</evidence>
<evidence type="ECO:0000269" key="3">
    <source>
    </source>
</evidence>
<evidence type="ECO:0000269" key="4">
    <source>
    </source>
</evidence>
<evidence type="ECO:0000305" key="5"/>
<evidence type="ECO:0000305" key="6">
    <source>
    </source>
</evidence>
<evidence type="ECO:0000305" key="7">
    <source>
    </source>
</evidence>
<evidence type="ECO:0000312" key="8">
    <source>
        <dbReference type="Proteomes" id="UP000001940"/>
    </source>
</evidence>
<evidence type="ECO:0000312" key="9">
    <source>
        <dbReference type="WormBase" id="T27F2.4"/>
    </source>
</evidence>
<protein>
    <recommendedName>
        <fullName evidence="5">Transcription factor zip-10</fullName>
    </recommendedName>
</protein>
<accession>Q22835</accession>
<sequence>MTTMTNSLISNSVSSVPESLFSSASIHRPVAINPAMLAQFSINLPVLPFESSASLGTSTTSSSRCSSTESSAAPGKIRRGRPQQEIADGQDAHSQKKRHRRLYARQYRAQMRQKVENVKSLHDEKEQLELEVKALRQAVSGLQQENAQKDFLISILQLNNQINHS</sequence>
<name>ZIP10_CAEEL</name>
<organism evidence="8">
    <name type="scientific">Caenorhabditis elegans</name>
    <dbReference type="NCBI Taxonomy" id="6239"/>
    <lineage>
        <taxon>Eukaryota</taxon>
        <taxon>Metazoa</taxon>
        <taxon>Ecdysozoa</taxon>
        <taxon>Nematoda</taxon>
        <taxon>Chromadorea</taxon>
        <taxon>Rhabditida</taxon>
        <taxon>Rhabditina</taxon>
        <taxon>Rhabditomorpha</taxon>
        <taxon>Rhabditoidea</taxon>
        <taxon>Rhabditidae</taxon>
        <taxon>Peloderinae</taxon>
        <taxon>Caenorhabditis</taxon>
    </lineage>
</organism>
<proteinExistence type="evidence at protein level"/>
<comment type="function">
    <text evidence="4">Transcription factor that regulates the expression of genes in response to changes in temperature. In particular, binds to the promoter region of genes such as asp-17 in response to severe cold to warm temperature transitions to promote gene expression. Promotes stress-induced death, particularly in older animals, following cold shock followed by warming and this may have evolved as a form of kin survival under thermal stress conditions, favoring the survival of younger animals.</text>
</comment>
<comment type="subcellular location">
    <subcellularLocation>
        <location evidence="7">Nucleus</location>
    </subcellularLocation>
</comment>
<comment type="induction">
    <text evidence="4 6">Negatively regulated by the microRNA mir-60 (PubMed:27623524, PubMed:29664006). Induced in response to thermal stress in conditions where severe cold temperatures are followed by warmer temperatures (PubMed:29664006).</text>
</comment>
<comment type="disruption phenotype">
    <text evidence="3">RNAi-mediated knockdown reduces the lifespan extension phenotype of the mir-60 loss of function mutant.</text>
</comment>
<dbReference type="EMBL" id="BX284605">
    <property type="protein sequence ID" value="CAA98551.1"/>
    <property type="molecule type" value="Genomic_DNA"/>
</dbReference>
<dbReference type="PIR" id="T25378">
    <property type="entry name" value="T25378"/>
</dbReference>
<dbReference type="RefSeq" id="NP_505951.1">
    <property type="nucleotide sequence ID" value="NM_073550.8"/>
</dbReference>
<dbReference type="SMR" id="Q22835"/>
<dbReference type="FunCoup" id="Q22835">
    <property type="interactions" value="265"/>
</dbReference>
<dbReference type="IntAct" id="Q22835">
    <property type="interactions" value="13"/>
</dbReference>
<dbReference type="STRING" id="6239.T27F2.4.1"/>
<dbReference type="PaxDb" id="6239-T27F2.4"/>
<dbReference type="EnsemblMetazoa" id="T27F2.4.1">
    <property type="protein sequence ID" value="T27F2.4.1"/>
    <property type="gene ID" value="WBGene00012101"/>
</dbReference>
<dbReference type="GeneID" id="179599"/>
<dbReference type="KEGG" id="cel:CELE_T27F2.4"/>
<dbReference type="UCSC" id="T27F2.4">
    <property type="organism name" value="c. elegans"/>
</dbReference>
<dbReference type="AGR" id="WB:WBGene00012101"/>
<dbReference type="CTD" id="179599"/>
<dbReference type="WormBase" id="T27F2.4">
    <property type="protein sequence ID" value="CE06522"/>
    <property type="gene ID" value="WBGene00012101"/>
    <property type="gene designation" value="zip-10"/>
</dbReference>
<dbReference type="eggNOG" id="ENOG502THIB">
    <property type="taxonomic scope" value="Eukaryota"/>
</dbReference>
<dbReference type="HOGENOM" id="CLU_1612306_0_0_1"/>
<dbReference type="InParanoid" id="Q22835"/>
<dbReference type="OMA" id="YRAQMRQ"/>
<dbReference type="OrthoDB" id="5838838at2759"/>
<dbReference type="SignaLink" id="Q22835"/>
<dbReference type="PRO" id="PR:Q22835"/>
<dbReference type="Proteomes" id="UP000001940">
    <property type="component" value="Chromosome V"/>
</dbReference>
<dbReference type="Bgee" id="WBGene00012101">
    <property type="expression patterns" value="Expressed in pharyngeal muscle cell (C elegans) and 3 other cell types or tissues"/>
</dbReference>
<dbReference type="GO" id="GO:0005634">
    <property type="term" value="C:nucleus"/>
    <property type="evidence" value="ECO:0000314"/>
    <property type="project" value="UniProtKB"/>
</dbReference>
<dbReference type="GO" id="GO:0001046">
    <property type="term" value="F:core promoter sequence-specific DNA binding"/>
    <property type="evidence" value="ECO:0000314"/>
    <property type="project" value="UniProtKB"/>
</dbReference>
<dbReference type="GO" id="GO:0045087">
    <property type="term" value="P:innate immune response"/>
    <property type="evidence" value="ECO:0007007"/>
    <property type="project" value="WormBase"/>
</dbReference>
<dbReference type="GO" id="GO:0010468">
    <property type="term" value="P:regulation of gene expression"/>
    <property type="evidence" value="ECO:0000314"/>
    <property type="project" value="UniProtKB"/>
</dbReference>